<evidence type="ECO:0000250" key="1">
    <source>
        <dbReference type="UniProtKB" id="P01942"/>
    </source>
</evidence>
<evidence type="ECO:0000250" key="2">
    <source>
        <dbReference type="UniProtKB" id="P01946"/>
    </source>
</evidence>
<evidence type="ECO:0000250" key="3">
    <source>
        <dbReference type="UniProtKB" id="P69905"/>
    </source>
</evidence>
<evidence type="ECO:0000255" key="4">
    <source>
        <dbReference type="PROSITE-ProRule" id="PRU00238"/>
    </source>
</evidence>
<comment type="function">
    <text>Involved in oxygen transport from the lung to the various peripheral tissues.</text>
</comment>
<comment type="function">
    <molecule>Hemopressin</molecule>
    <text evidence="2">Hemopressin acts as an antagonist peptide of the cannabinoid receptor CNR1. Hemopressin-binding efficiently blocks cannabinoid receptor CNR1 and subsequent signaling.</text>
</comment>
<comment type="subunit">
    <text>Heterotetramer of two alpha chains and two beta chains.</text>
</comment>
<comment type="tissue specificity">
    <text>Red blood cells.</text>
</comment>
<comment type="similarity">
    <text evidence="4">Belongs to the globin family.</text>
</comment>
<gene>
    <name type="primary">HBA</name>
</gene>
<proteinExistence type="evidence at protein level"/>
<dbReference type="PIR" id="S10615">
    <property type="entry name" value="HAGW"/>
</dbReference>
<dbReference type="SMR" id="P67815"/>
<dbReference type="GO" id="GO:0072562">
    <property type="term" value="C:blood microparticle"/>
    <property type="evidence" value="ECO:0007669"/>
    <property type="project" value="TreeGrafter"/>
</dbReference>
<dbReference type="GO" id="GO:0031838">
    <property type="term" value="C:haptoglobin-hemoglobin complex"/>
    <property type="evidence" value="ECO:0007669"/>
    <property type="project" value="TreeGrafter"/>
</dbReference>
<dbReference type="GO" id="GO:0005833">
    <property type="term" value="C:hemoglobin complex"/>
    <property type="evidence" value="ECO:0007669"/>
    <property type="project" value="InterPro"/>
</dbReference>
<dbReference type="GO" id="GO:0031720">
    <property type="term" value="F:haptoglobin binding"/>
    <property type="evidence" value="ECO:0007669"/>
    <property type="project" value="TreeGrafter"/>
</dbReference>
<dbReference type="GO" id="GO:0020037">
    <property type="term" value="F:heme binding"/>
    <property type="evidence" value="ECO:0007669"/>
    <property type="project" value="InterPro"/>
</dbReference>
<dbReference type="GO" id="GO:0005506">
    <property type="term" value="F:iron ion binding"/>
    <property type="evidence" value="ECO:0007669"/>
    <property type="project" value="InterPro"/>
</dbReference>
<dbReference type="GO" id="GO:0043177">
    <property type="term" value="F:organic acid binding"/>
    <property type="evidence" value="ECO:0007669"/>
    <property type="project" value="TreeGrafter"/>
</dbReference>
<dbReference type="GO" id="GO:0019825">
    <property type="term" value="F:oxygen binding"/>
    <property type="evidence" value="ECO:0007669"/>
    <property type="project" value="InterPro"/>
</dbReference>
<dbReference type="GO" id="GO:0005344">
    <property type="term" value="F:oxygen carrier activity"/>
    <property type="evidence" value="ECO:0007669"/>
    <property type="project" value="UniProtKB-KW"/>
</dbReference>
<dbReference type="GO" id="GO:0004601">
    <property type="term" value="F:peroxidase activity"/>
    <property type="evidence" value="ECO:0007669"/>
    <property type="project" value="TreeGrafter"/>
</dbReference>
<dbReference type="GO" id="GO:0042744">
    <property type="term" value="P:hydrogen peroxide catabolic process"/>
    <property type="evidence" value="ECO:0007669"/>
    <property type="project" value="TreeGrafter"/>
</dbReference>
<dbReference type="CDD" id="cd08927">
    <property type="entry name" value="Hb-alpha-like"/>
    <property type="match status" value="1"/>
</dbReference>
<dbReference type="FunFam" id="1.10.490.10:FF:000002">
    <property type="entry name" value="Hemoglobin subunit alpha"/>
    <property type="match status" value="1"/>
</dbReference>
<dbReference type="Gene3D" id="1.10.490.10">
    <property type="entry name" value="Globins"/>
    <property type="match status" value="1"/>
</dbReference>
<dbReference type="InterPro" id="IPR000971">
    <property type="entry name" value="Globin"/>
</dbReference>
<dbReference type="InterPro" id="IPR009050">
    <property type="entry name" value="Globin-like_sf"/>
</dbReference>
<dbReference type="InterPro" id="IPR012292">
    <property type="entry name" value="Globin/Proto"/>
</dbReference>
<dbReference type="InterPro" id="IPR002338">
    <property type="entry name" value="Hemoglobin_a-typ"/>
</dbReference>
<dbReference type="InterPro" id="IPR050056">
    <property type="entry name" value="Hemoglobin_oxygen_transport"/>
</dbReference>
<dbReference type="InterPro" id="IPR002339">
    <property type="entry name" value="Hemoglobin_pi"/>
</dbReference>
<dbReference type="PANTHER" id="PTHR11442">
    <property type="entry name" value="HEMOGLOBIN FAMILY MEMBER"/>
    <property type="match status" value="1"/>
</dbReference>
<dbReference type="PANTHER" id="PTHR11442:SF48">
    <property type="entry name" value="HEMOGLOBIN SUBUNIT ALPHA"/>
    <property type="match status" value="1"/>
</dbReference>
<dbReference type="Pfam" id="PF00042">
    <property type="entry name" value="Globin"/>
    <property type="match status" value="1"/>
</dbReference>
<dbReference type="PRINTS" id="PR00612">
    <property type="entry name" value="ALPHAHAEM"/>
</dbReference>
<dbReference type="PRINTS" id="PR00815">
    <property type="entry name" value="PIHAEM"/>
</dbReference>
<dbReference type="SUPFAM" id="SSF46458">
    <property type="entry name" value="Globin-like"/>
    <property type="match status" value="1"/>
</dbReference>
<dbReference type="PROSITE" id="PS01033">
    <property type="entry name" value="GLOBIN"/>
    <property type="match status" value="1"/>
</dbReference>
<protein>
    <recommendedName>
        <fullName>Hemoglobin subunit alpha</fullName>
    </recommendedName>
    <alternativeName>
        <fullName>Alpha-globin</fullName>
    </alternativeName>
    <alternativeName>
        <fullName>Hemoglobin alpha chain</fullName>
    </alternativeName>
    <component>
        <recommendedName>
            <fullName evidence="2">Hemopressin</fullName>
        </recommendedName>
    </component>
</protein>
<keyword id="KW-0007">Acetylation</keyword>
<keyword id="KW-0903">Direct protein sequencing</keyword>
<keyword id="KW-0349">Heme</keyword>
<keyword id="KW-0408">Iron</keyword>
<keyword id="KW-0479">Metal-binding</keyword>
<keyword id="KW-0561">Oxygen transport</keyword>
<keyword id="KW-0597">Phosphoprotein</keyword>
<keyword id="KW-0813">Transport</keyword>
<accession>P67815</accession>
<accession>P07426</accession>
<name>HBA_LAMGU</name>
<organism>
    <name type="scientific">Lama guanicoe</name>
    <name type="common">Guanaco</name>
    <name type="synonym">Lama glama guanicoe</name>
    <dbReference type="NCBI Taxonomy" id="9840"/>
    <lineage>
        <taxon>Eukaryota</taxon>
        <taxon>Metazoa</taxon>
        <taxon>Chordata</taxon>
        <taxon>Craniata</taxon>
        <taxon>Vertebrata</taxon>
        <taxon>Euteleostomi</taxon>
        <taxon>Mammalia</taxon>
        <taxon>Eutheria</taxon>
        <taxon>Laurasiatheria</taxon>
        <taxon>Artiodactyla</taxon>
        <taxon>Tylopoda</taxon>
        <taxon>Camelidae</taxon>
        <taxon>Lama</taxon>
    </lineage>
</organism>
<sequence>VLSSKDKANIKTAFGKIGGHAADYGAEALERMFLGFPTTKTYFPHFDLSHGSAQVKAHGKKVGDALTKAADHLDDLPSALSALSDLHAHKLRVDPVNFKLLSHCLLVTVAAHHPGDFTPAVHASLDKFLANVSTVLTSKYR</sequence>
<feature type="chain" id="PRO_0000052658" description="Hemoglobin subunit alpha">
    <location>
        <begin position="1"/>
        <end position="141"/>
    </location>
</feature>
<feature type="peptide" id="PRO_0000455886" description="Hemopressin" evidence="2">
    <location>
        <begin position="95"/>
        <end position="103"/>
    </location>
</feature>
<feature type="domain" description="Globin" evidence="4">
    <location>
        <begin position="1"/>
        <end position="141"/>
    </location>
</feature>
<feature type="binding site" evidence="4">
    <location>
        <position position="58"/>
    </location>
    <ligand>
        <name>O2</name>
        <dbReference type="ChEBI" id="CHEBI:15379"/>
    </ligand>
</feature>
<feature type="binding site" description="proximal binding residue" evidence="4">
    <location>
        <position position="87"/>
    </location>
    <ligand>
        <name>heme b</name>
        <dbReference type="ChEBI" id="CHEBI:60344"/>
    </ligand>
    <ligandPart>
        <name>Fe</name>
        <dbReference type="ChEBI" id="CHEBI:18248"/>
    </ligandPart>
</feature>
<feature type="modified residue" description="Phosphoserine" evidence="3">
    <location>
        <position position="3"/>
    </location>
</feature>
<feature type="modified residue" description="N6-succinyllysine" evidence="1">
    <location>
        <position position="7"/>
    </location>
</feature>
<feature type="modified residue" description="N6-succinyllysine" evidence="1">
    <location>
        <position position="11"/>
    </location>
</feature>
<feature type="modified residue" description="N6-acetyllysine; alternate" evidence="3">
    <location>
        <position position="16"/>
    </location>
</feature>
<feature type="modified residue" description="N6-succinyllysine; alternate" evidence="1">
    <location>
        <position position="16"/>
    </location>
</feature>
<feature type="modified residue" description="Phosphotyrosine" evidence="3">
    <location>
        <position position="24"/>
    </location>
</feature>
<feature type="modified residue" description="N6-succinyllysine" evidence="1">
    <location>
        <position position="40"/>
    </location>
</feature>
<feature type="modified residue" description="Phosphoserine" evidence="3">
    <location>
        <position position="49"/>
    </location>
</feature>
<feature type="modified residue" description="Phosphoserine" evidence="1">
    <location>
        <position position="102"/>
    </location>
</feature>
<feature type="modified residue" description="Phosphothreonine" evidence="1">
    <location>
        <position position="108"/>
    </location>
</feature>
<feature type="modified residue" description="Phosphoserine" evidence="1">
    <location>
        <position position="124"/>
    </location>
</feature>
<feature type="modified residue" description="Phosphothreonine" evidence="1">
    <location>
        <position position="134"/>
    </location>
</feature>
<feature type="modified residue" description="Phosphothreonine" evidence="1">
    <location>
        <position position="137"/>
    </location>
</feature>
<feature type="modified residue" description="Phosphoserine" evidence="1">
    <location>
        <position position="138"/>
    </location>
</feature>
<reference key="1">
    <citation type="journal article" date="1990" name="Biol. Chem. Hoppe-Seyler">
        <title>Primary structure and oxygen-binding properties of the hemoglobin from guanaco (Lama guanacoe, Tylopoda).</title>
        <authorList>
            <person name="Piccinini M."/>
            <person name="Kleinschmidt T."/>
            <person name="Jurgens K.D."/>
            <person name="Braunitzer G."/>
        </authorList>
    </citation>
    <scope>PROTEIN SEQUENCE</scope>
</reference>